<protein>
    <recommendedName>
        <fullName evidence="1">Large ribosomal subunit protein uL15</fullName>
    </recommendedName>
    <alternativeName>
        <fullName evidence="3">50S ribosomal protein L15</fullName>
    </alternativeName>
</protein>
<gene>
    <name evidence="1" type="primary">rplO</name>
    <name type="ordered locus">Meso_1659</name>
</gene>
<accession>Q11HS1</accession>
<feature type="chain" id="PRO_0000251527" description="Large ribosomal subunit protein uL15">
    <location>
        <begin position="1"/>
        <end position="155"/>
    </location>
</feature>
<feature type="region of interest" description="Disordered" evidence="2">
    <location>
        <begin position="1"/>
        <end position="41"/>
    </location>
</feature>
<feature type="compositionally biased region" description="Basic and acidic residues" evidence="2">
    <location>
        <begin position="1"/>
        <end position="13"/>
    </location>
</feature>
<feature type="compositionally biased region" description="Gly residues" evidence="2">
    <location>
        <begin position="21"/>
        <end position="35"/>
    </location>
</feature>
<comment type="function">
    <text evidence="1">Binds to the 23S rRNA.</text>
</comment>
<comment type="subunit">
    <text evidence="1">Part of the 50S ribosomal subunit.</text>
</comment>
<comment type="similarity">
    <text evidence="1">Belongs to the universal ribosomal protein uL15 family.</text>
</comment>
<organism>
    <name type="scientific">Chelativorans sp. (strain BNC1)</name>
    <dbReference type="NCBI Taxonomy" id="266779"/>
    <lineage>
        <taxon>Bacteria</taxon>
        <taxon>Pseudomonadati</taxon>
        <taxon>Pseudomonadota</taxon>
        <taxon>Alphaproteobacteria</taxon>
        <taxon>Hyphomicrobiales</taxon>
        <taxon>Phyllobacteriaceae</taxon>
        <taxon>Chelativorans</taxon>
    </lineage>
</organism>
<name>RL15_CHESB</name>
<dbReference type="EMBL" id="CP000390">
    <property type="protein sequence ID" value="ABG63054.1"/>
    <property type="molecule type" value="Genomic_DNA"/>
</dbReference>
<dbReference type="SMR" id="Q11HS1"/>
<dbReference type="STRING" id="266779.Meso_1659"/>
<dbReference type="KEGG" id="mes:Meso_1659"/>
<dbReference type="eggNOG" id="COG0200">
    <property type="taxonomic scope" value="Bacteria"/>
</dbReference>
<dbReference type="HOGENOM" id="CLU_055188_4_0_5"/>
<dbReference type="OrthoDB" id="9810293at2"/>
<dbReference type="GO" id="GO:0022625">
    <property type="term" value="C:cytosolic large ribosomal subunit"/>
    <property type="evidence" value="ECO:0007669"/>
    <property type="project" value="TreeGrafter"/>
</dbReference>
<dbReference type="GO" id="GO:0019843">
    <property type="term" value="F:rRNA binding"/>
    <property type="evidence" value="ECO:0007669"/>
    <property type="project" value="UniProtKB-UniRule"/>
</dbReference>
<dbReference type="GO" id="GO:0003735">
    <property type="term" value="F:structural constituent of ribosome"/>
    <property type="evidence" value="ECO:0007669"/>
    <property type="project" value="InterPro"/>
</dbReference>
<dbReference type="GO" id="GO:0006412">
    <property type="term" value="P:translation"/>
    <property type="evidence" value="ECO:0007669"/>
    <property type="project" value="UniProtKB-UniRule"/>
</dbReference>
<dbReference type="Gene3D" id="3.100.10.10">
    <property type="match status" value="1"/>
</dbReference>
<dbReference type="HAMAP" id="MF_01341">
    <property type="entry name" value="Ribosomal_uL15"/>
    <property type="match status" value="1"/>
</dbReference>
<dbReference type="InterPro" id="IPR030878">
    <property type="entry name" value="Ribosomal_uL15"/>
</dbReference>
<dbReference type="InterPro" id="IPR021131">
    <property type="entry name" value="Ribosomal_uL15/eL18"/>
</dbReference>
<dbReference type="InterPro" id="IPR036227">
    <property type="entry name" value="Ribosomal_uL15/eL18_sf"/>
</dbReference>
<dbReference type="InterPro" id="IPR005749">
    <property type="entry name" value="Ribosomal_uL15_bac-type"/>
</dbReference>
<dbReference type="InterPro" id="IPR001196">
    <property type="entry name" value="Ribosomal_uL15_CS"/>
</dbReference>
<dbReference type="NCBIfam" id="TIGR01071">
    <property type="entry name" value="rplO_bact"/>
    <property type="match status" value="1"/>
</dbReference>
<dbReference type="PANTHER" id="PTHR12934">
    <property type="entry name" value="50S RIBOSOMAL PROTEIN L15"/>
    <property type="match status" value="1"/>
</dbReference>
<dbReference type="PANTHER" id="PTHR12934:SF11">
    <property type="entry name" value="LARGE RIBOSOMAL SUBUNIT PROTEIN UL15M"/>
    <property type="match status" value="1"/>
</dbReference>
<dbReference type="Pfam" id="PF00828">
    <property type="entry name" value="Ribosomal_L27A"/>
    <property type="match status" value="1"/>
</dbReference>
<dbReference type="SUPFAM" id="SSF52080">
    <property type="entry name" value="Ribosomal proteins L15p and L18e"/>
    <property type="match status" value="1"/>
</dbReference>
<dbReference type="PROSITE" id="PS00475">
    <property type="entry name" value="RIBOSOMAL_L15"/>
    <property type="match status" value="1"/>
</dbReference>
<proteinExistence type="inferred from homology"/>
<keyword id="KW-0687">Ribonucleoprotein</keyword>
<keyword id="KW-0689">Ribosomal protein</keyword>
<keyword id="KW-0694">RNA-binding</keyword>
<keyword id="KW-0699">rRNA-binding</keyword>
<sequence>MKLNELRDAEGATKARKRVGRGIGSGSGKTGGRGVKGQKSRSGVAIKGFEGGQMPLYRRLPKRGFTNIFGKDYNEVSLGRIQAAIDANKLDAAATIDGAALLNAGVIRRLKDGVRVLSGGEITAKVTLDVAGASKSAVEKIEKAGGSVKLPEKAA</sequence>
<evidence type="ECO:0000255" key="1">
    <source>
        <dbReference type="HAMAP-Rule" id="MF_01341"/>
    </source>
</evidence>
<evidence type="ECO:0000256" key="2">
    <source>
        <dbReference type="SAM" id="MobiDB-lite"/>
    </source>
</evidence>
<evidence type="ECO:0000305" key="3"/>
<reference key="1">
    <citation type="submission" date="2006-06" db="EMBL/GenBank/DDBJ databases">
        <title>Complete sequence of chromosome of Mesorhizobium sp. BNC1.</title>
        <authorList>
            <consortium name="US DOE Joint Genome Institute"/>
            <person name="Copeland A."/>
            <person name="Lucas S."/>
            <person name="Lapidus A."/>
            <person name="Barry K."/>
            <person name="Detter J.C."/>
            <person name="Glavina del Rio T."/>
            <person name="Hammon N."/>
            <person name="Israni S."/>
            <person name="Dalin E."/>
            <person name="Tice H."/>
            <person name="Pitluck S."/>
            <person name="Chertkov O."/>
            <person name="Brettin T."/>
            <person name="Bruce D."/>
            <person name="Han C."/>
            <person name="Tapia R."/>
            <person name="Gilna P."/>
            <person name="Schmutz J."/>
            <person name="Larimer F."/>
            <person name="Land M."/>
            <person name="Hauser L."/>
            <person name="Kyrpides N."/>
            <person name="Mikhailova N."/>
            <person name="Richardson P."/>
        </authorList>
    </citation>
    <scope>NUCLEOTIDE SEQUENCE [LARGE SCALE GENOMIC DNA]</scope>
    <source>
        <strain>BNC1</strain>
    </source>
</reference>